<organism>
    <name type="scientific">Prochlorococcus marinus (strain NATL2A)</name>
    <dbReference type="NCBI Taxonomy" id="59920"/>
    <lineage>
        <taxon>Bacteria</taxon>
        <taxon>Bacillati</taxon>
        <taxon>Cyanobacteriota</taxon>
        <taxon>Cyanophyceae</taxon>
        <taxon>Synechococcales</taxon>
        <taxon>Prochlorococcaceae</taxon>
        <taxon>Prochlorococcus</taxon>
    </lineage>
</organism>
<accession>Q46JS5</accession>
<protein>
    <recommendedName>
        <fullName evidence="1">Cytochrome b6-f complex subunit 7</fullName>
    </recommendedName>
    <alternativeName>
        <fullName evidence="1">Cytochrome b6-f complex subunit PetM</fullName>
    </alternativeName>
    <alternativeName>
        <fullName evidence="1">Cytochrome b6-f complex subunit VII</fullName>
    </alternativeName>
</protein>
<proteinExistence type="inferred from homology"/>
<evidence type="ECO:0000255" key="1">
    <source>
        <dbReference type="HAMAP-Rule" id="MF_00396"/>
    </source>
</evidence>
<comment type="function">
    <text evidence="1">Component of the cytochrome b6-f complex, which mediates electron transfer between photosystem II (PSII) and photosystem I (PSI), cyclic electron flow around PSI, and state transitions.</text>
</comment>
<comment type="subunit">
    <text evidence="1">The 4 large subunits of the cytochrome b6-f complex are cytochrome b6, subunit IV (17 kDa polypeptide, PetD), cytochrome f and the Rieske protein, while the 4 small subunits are PetG, PetL, PetM and PetN. The complex functions as a dimer.</text>
</comment>
<comment type="subcellular location">
    <subcellularLocation>
        <location evidence="1">Cellular thylakoid membrane</location>
        <topology evidence="1">Single-pass membrane protein</topology>
    </subcellularLocation>
</comment>
<comment type="similarity">
    <text evidence="1">Belongs to the PetM family.</text>
</comment>
<dbReference type="EMBL" id="CP000095">
    <property type="protein sequence ID" value="AAZ58253.1"/>
    <property type="molecule type" value="Genomic_DNA"/>
</dbReference>
<dbReference type="RefSeq" id="WP_011294850.1">
    <property type="nucleotide sequence ID" value="NC_007335.2"/>
</dbReference>
<dbReference type="SMR" id="Q46JS5"/>
<dbReference type="STRING" id="59920.PMN2A_0762"/>
<dbReference type="KEGG" id="pmn:PMN2A_0762"/>
<dbReference type="HOGENOM" id="CLU_216743_1_0_3"/>
<dbReference type="Proteomes" id="UP000002535">
    <property type="component" value="Chromosome"/>
</dbReference>
<dbReference type="GO" id="GO:0009512">
    <property type="term" value="C:cytochrome b6f complex"/>
    <property type="evidence" value="ECO:0007669"/>
    <property type="project" value="InterPro"/>
</dbReference>
<dbReference type="GO" id="GO:0031676">
    <property type="term" value="C:plasma membrane-derived thylakoid membrane"/>
    <property type="evidence" value="ECO:0007669"/>
    <property type="project" value="UniProtKB-SubCell"/>
</dbReference>
<dbReference type="GO" id="GO:0009055">
    <property type="term" value="F:electron transfer activity"/>
    <property type="evidence" value="ECO:0007669"/>
    <property type="project" value="UniProtKB-UniRule"/>
</dbReference>
<dbReference type="GO" id="GO:0015979">
    <property type="term" value="P:photosynthesis"/>
    <property type="evidence" value="ECO:0007669"/>
    <property type="project" value="UniProtKB-KW"/>
</dbReference>
<dbReference type="HAMAP" id="MF_00396">
    <property type="entry name" value="Cytb6_f_PetM"/>
    <property type="match status" value="1"/>
</dbReference>
<dbReference type="InterPro" id="IPR012595">
    <property type="entry name" value="PetM_cyt_b6/f_cplx_su7"/>
</dbReference>
<dbReference type="NCBIfam" id="NF008826">
    <property type="entry name" value="PRK11876.1-2"/>
    <property type="match status" value="1"/>
</dbReference>
<dbReference type="Pfam" id="PF08041">
    <property type="entry name" value="PetM"/>
    <property type="match status" value="1"/>
</dbReference>
<feature type="chain" id="PRO_0000233232" description="Cytochrome b6-f complex subunit 7">
    <location>
        <begin position="1"/>
        <end position="32"/>
    </location>
</feature>
<feature type="transmembrane region" description="Helical" evidence="1">
    <location>
        <begin position="5"/>
        <end position="25"/>
    </location>
</feature>
<gene>
    <name evidence="1" type="primary">petM</name>
    <name type="ordered locus">PMN2A_0762</name>
</gene>
<reference key="1">
    <citation type="journal article" date="2007" name="PLoS Genet.">
        <title>Patterns and implications of gene gain and loss in the evolution of Prochlorococcus.</title>
        <authorList>
            <person name="Kettler G.C."/>
            <person name="Martiny A.C."/>
            <person name="Huang K."/>
            <person name="Zucker J."/>
            <person name="Coleman M.L."/>
            <person name="Rodrigue S."/>
            <person name="Chen F."/>
            <person name="Lapidus A."/>
            <person name="Ferriera S."/>
            <person name="Johnson J."/>
            <person name="Steglich C."/>
            <person name="Church G.M."/>
            <person name="Richardson P."/>
            <person name="Chisholm S.W."/>
        </authorList>
    </citation>
    <scope>NUCLEOTIDE SEQUENCE [LARGE SCALE GENOMIC DNA]</scope>
    <source>
        <strain>NATL2A</strain>
    </source>
</reference>
<sequence>MASEIFGIAAVFWVLIPVGLLGGVLLLKLQGD</sequence>
<name>PETM_PROMT</name>
<keyword id="KW-0249">Electron transport</keyword>
<keyword id="KW-0472">Membrane</keyword>
<keyword id="KW-0602">Photosynthesis</keyword>
<keyword id="KW-1185">Reference proteome</keyword>
<keyword id="KW-0793">Thylakoid</keyword>
<keyword id="KW-0812">Transmembrane</keyword>
<keyword id="KW-1133">Transmembrane helix</keyword>
<keyword id="KW-0813">Transport</keyword>